<feature type="signal peptide" evidence="4">
    <location>
        <begin position="1"/>
        <end position="18"/>
    </location>
</feature>
<feature type="chain" id="PRO_0000253613" description="Interleukin-10">
    <location>
        <begin position="19"/>
        <end position="178"/>
    </location>
</feature>
<feature type="glycosylation site" description="N-linked (GlcNAc...) asparagine" evidence="4">
    <location>
        <position position="134"/>
    </location>
</feature>
<feature type="disulfide bond" evidence="1">
    <location>
        <begin position="30"/>
        <end position="126"/>
    </location>
</feature>
<feature type="disulfide bond" evidence="1">
    <location>
        <begin position="80"/>
        <end position="132"/>
    </location>
</feature>
<comment type="function">
    <text evidence="2 3">Major immune regulatory cytokine that acts on many cells of the immune system where it has profound anti-inflammatory functions, limiting excessive tissue disruption caused by inflammation. Mechanistically, IL10 binds to its heterotetrameric receptor comprising IL10RA and IL10RB leading to JAK1 and STAT2-mediated phosphorylation of STAT3. In turn, STAT3 translocates to the nucleus where it drives expression of anti-inflammatory mediators. Targets antigen-presenting cells (APCs) such as macrophages and monocytes and inhibits their release of pro-inflammatory cytokines including granulocyte-macrophage colony-stimulating factor /GM-CSF, granulocyte colony-stimulating factor/G-CSF, IL-1 alpha, IL-1 beta, IL-6, IL-8 and TNF-alpha. Also interferes with antigen presentation by reducing the expression of MHC-class II and co-stimulatory molecules, thereby inhibiting their ability to induce T cell activation (By similarity). In addition, controls the inflammatory response of macrophages by reprogramming essential metabolic pathways including mTOR signaling (By similarity).</text>
</comment>
<comment type="subunit">
    <text evidence="3">Homodimer. Interacts with IL10RA and IL10RB.</text>
</comment>
<comment type="subcellular location">
    <subcellularLocation>
        <location evidence="3">Secreted</location>
    </subcellularLocation>
</comment>
<comment type="similarity">
    <text evidence="5">Belongs to the IL-10 family.</text>
</comment>
<organism>
    <name type="scientific">Saimiri sciureus</name>
    <name type="common">Common squirrel monkey</name>
    <dbReference type="NCBI Taxonomy" id="9521"/>
    <lineage>
        <taxon>Eukaryota</taxon>
        <taxon>Metazoa</taxon>
        <taxon>Chordata</taxon>
        <taxon>Craniata</taxon>
        <taxon>Vertebrata</taxon>
        <taxon>Euteleostomi</taxon>
        <taxon>Mammalia</taxon>
        <taxon>Eutheria</taxon>
        <taxon>Euarchontoglires</taxon>
        <taxon>Primates</taxon>
        <taxon>Haplorrhini</taxon>
        <taxon>Platyrrhini</taxon>
        <taxon>Cebidae</taxon>
        <taxon>Saimiriinae</taxon>
        <taxon>Saimiri</taxon>
    </lineage>
</organism>
<sequence>MHSSALLCCLVFLTGVRASPGQGTQSENSCTHFPGSLPHMLRELRVAFGRVKTFFQKKDQLDSMLLKESLLEDFKGYLGCQALSEMIQFYLEEVMPQAENHDPDIKEHVNSLGEKLKTFRLRLRRCHRFLPCENKSKAVAQVKNAVSKLQEKGVYKAMSEFDIFIDYIEAYMTMKTQN</sequence>
<reference key="1">
    <citation type="journal article" date="2002" name="Immunogenetics">
        <title>Molecular cloning, characterization, and quantification of squirrel monkey (Saimiri sciureus) Th1 and Th2 cytokines.</title>
        <authorList>
            <person name="Heraud J.M."/>
            <person name="Lavergne A."/>
            <person name="Kazanji M."/>
        </authorList>
    </citation>
    <scope>NUCLEOTIDE SEQUENCE [MRNA]</scope>
</reference>
<proteinExistence type="evidence at transcript level"/>
<keyword id="KW-0202">Cytokine</keyword>
<keyword id="KW-1015">Disulfide bond</keyword>
<keyword id="KW-0325">Glycoprotein</keyword>
<keyword id="KW-0964">Secreted</keyword>
<keyword id="KW-0732">Signal</keyword>
<dbReference type="EMBL" id="AF294758">
    <property type="protein sequence ID" value="AAK92045.1"/>
    <property type="molecule type" value="mRNA"/>
</dbReference>
<dbReference type="SMR" id="Q8MKG9"/>
<dbReference type="GlyCosmos" id="Q8MKG9">
    <property type="glycosylation" value="1 site, No reported glycans"/>
</dbReference>
<dbReference type="GO" id="GO:0005615">
    <property type="term" value="C:extracellular space"/>
    <property type="evidence" value="ECO:0000250"/>
    <property type="project" value="UniProtKB"/>
</dbReference>
<dbReference type="GO" id="GO:0005125">
    <property type="term" value="F:cytokine activity"/>
    <property type="evidence" value="ECO:0007669"/>
    <property type="project" value="UniProtKB-KW"/>
</dbReference>
<dbReference type="GO" id="GO:0006955">
    <property type="term" value="P:immune response"/>
    <property type="evidence" value="ECO:0007669"/>
    <property type="project" value="InterPro"/>
</dbReference>
<dbReference type="GO" id="GO:0030889">
    <property type="term" value="P:negative regulation of B cell proliferation"/>
    <property type="evidence" value="ECO:0000250"/>
    <property type="project" value="UniProtKB"/>
</dbReference>
<dbReference type="GO" id="GO:0002719">
    <property type="term" value="P:negative regulation of cytokine production involved in immune response"/>
    <property type="evidence" value="ECO:0000250"/>
    <property type="project" value="UniProtKB"/>
</dbReference>
<dbReference type="GO" id="GO:0050728">
    <property type="term" value="P:negative regulation of inflammatory response"/>
    <property type="evidence" value="ECO:0000250"/>
    <property type="project" value="UniProtKB"/>
</dbReference>
<dbReference type="GO" id="GO:0032715">
    <property type="term" value="P:negative regulation of interleukin-6 production"/>
    <property type="evidence" value="ECO:0000250"/>
    <property type="project" value="UniProtKB"/>
</dbReference>
<dbReference type="GO" id="GO:0051045">
    <property type="term" value="P:negative regulation of membrane protein ectodomain proteolysis"/>
    <property type="evidence" value="ECO:0000250"/>
    <property type="project" value="UniProtKB"/>
</dbReference>
<dbReference type="GO" id="GO:0002904">
    <property type="term" value="P:positive regulation of B cell apoptotic process"/>
    <property type="evidence" value="ECO:0000250"/>
    <property type="project" value="UniProtKB"/>
</dbReference>
<dbReference type="GO" id="GO:0001819">
    <property type="term" value="P:positive regulation of cytokine production"/>
    <property type="evidence" value="ECO:0000250"/>
    <property type="project" value="UniProtKB"/>
</dbReference>
<dbReference type="GO" id="GO:0051091">
    <property type="term" value="P:positive regulation of DNA-binding transcription factor activity"/>
    <property type="evidence" value="ECO:0000250"/>
    <property type="project" value="UniProtKB"/>
</dbReference>
<dbReference type="GO" id="GO:0045893">
    <property type="term" value="P:positive regulation of DNA-templated transcription"/>
    <property type="evidence" value="ECO:0000250"/>
    <property type="project" value="UniProtKB"/>
</dbReference>
<dbReference type="GO" id="GO:0051384">
    <property type="term" value="P:response to glucocorticoid"/>
    <property type="evidence" value="ECO:0000250"/>
    <property type="project" value="UniProtKB"/>
</dbReference>
<dbReference type="GO" id="GO:0002237">
    <property type="term" value="P:response to molecule of bacterial origin"/>
    <property type="evidence" value="ECO:0000250"/>
    <property type="project" value="UniProtKB"/>
</dbReference>
<dbReference type="FunFam" id="1.20.1250.10:FF:000011">
    <property type="entry name" value="Interleukin-10"/>
    <property type="match status" value="1"/>
</dbReference>
<dbReference type="Gene3D" id="1.20.1250.10">
    <property type="match status" value="1"/>
</dbReference>
<dbReference type="InterPro" id="IPR009079">
    <property type="entry name" value="4_helix_cytokine-like_core"/>
</dbReference>
<dbReference type="InterPro" id="IPR000098">
    <property type="entry name" value="IL-10"/>
</dbReference>
<dbReference type="InterPro" id="IPR020443">
    <property type="entry name" value="IL-10/19/20/24/26"/>
</dbReference>
<dbReference type="InterPro" id="IPR020423">
    <property type="entry name" value="IL-10_CS"/>
</dbReference>
<dbReference type="PANTHER" id="PTHR48482:SF5">
    <property type="entry name" value="INTERLEUKIN-10"/>
    <property type="match status" value="1"/>
</dbReference>
<dbReference type="PANTHER" id="PTHR48482">
    <property type="entry name" value="INTERLEUKIN-19-RELATED"/>
    <property type="match status" value="1"/>
</dbReference>
<dbReference type="Pfam" id="PF00726">
    <property type="entry name" value="IL10"/>
    <property type="match status" value="1"/>
</dbReference>
<dbReference type="PRINTS" id="PR01294">
    <property type="entry name" value="INTRLEUKIN10"/>
</dbReference>
<dbReference type="SMART" id="SM00188">
    <property type="entry name" value="IL10"/>
    <property type="match status" value="1"/>
</dbReference>
<dbReference type="SUPFAM" id="SSF47266">
    <property type="entry name" value="4-helical cytokines"/>
    <property type="match status" value="1"/>
</dbReference>
<dbReference type="PROSITE" id="PS00520">
    <property type="entry name" value="INTERLEUKIN_10"/>
    <property type="match status" value="1"/>
</dbReference>
<name>IL10_SAISC</name>
<evidence type="ECO:0000250" key="1"/>
<evidence type="ECO:0000250" key="2">
    <source>
        <dbReference type="UniProtKB" id="P18893"/>
    </source>
</evidence>
<evidence type="ECO:0000250" key="3">
    <source>
        <dbReference type="UniProtKB" id="P22301"/>
    </source>
</evidence>
<evidence type="ECO:0000255" key="4"/>
<evidence type="ECO:0000305" key="5"/>
<protein>
    <recommendedName>
        <fullName>Interleukin-10</fullName>
        <shortName>IL-10</shortName>
    </recommendedName>
    <alternativeName>
        <fullName>Cytokine synthesis inhibitory factor</fullName>
        <shortName>CSIF</shortName>
    </alternativeName>
</protein>
<accession>Q8MKG9</accession>
<gene>
    <name type="primary">IL10</name>
</gene>